<evidence type="ECO:0000255" key="1">
    <source>
        <dbReference type="HAMAP-Rule" id="MF_01026"/>
    </source>
</evidence>
<organism>
    <name type="scientific">Pseudomonas putida (strain GB-1)</name>
    <dbReference type="NCBI Taxonomy" id="76869"/>
    <lineage>
        <taxon>Bacteria</taxon>
        <taxon>Pseudomonadati</taxon>
        <taxon>Pseudomonadota</taxon>
        <taxon>Gammaproteobacteria</taxon>
        <taxon>Pseudomonadales</taxon>
        <taxon>Pseudomonadaceae</taxon>
        <taxon>Pseudomonas</taxon>
    </lineage>
</organism>
<protein>
    <recommendedName>
        <fullName evidence="1">3-isopropylmalate dehydratase large subunit</fullName>
        <ecNumber evidence="1">4.2.1.33</ecNumber>
    </recommendedName>
    <alternativeName>
        <fullName evidence="1">Alpha-IPM isomerase</fullName>
        <shortName evidence="1">IPMI</shortName>
    </alternativeName>
    <alternativeName>
        <fullName evidence="1">Isopropylmalate isomerase</fullName>
    </alternativeName>
</protein>
<sequence>MAGKTLYDKLWEAHEVKRRDDGSSLIYIDRHIIHEVTSPQAFEGLRLANRKPWRIDTNIATPDHNVPTTPERKGGIEAIVDQVSRLQVQTLDENCDEYGIVEFKMNDERQGIVHVISPEQGATLPGMTVVCGDSHTSTHGAFGALAHGIGTSEVEHVLATQCLVAKKMKNMLVRVEGQLPAGVTAKDIVLAVIGKIGTAGGNGHAMEFAGSAIRELSMEGRMTICNMSIEAGARVGLVATDATTVAYVEGRPYAPKGEQWKQAVESWKDLVSDEDAVFDTVVELDASQIKPQVSWGTSPEMVLAVDQRVPDPAAEADLVKRGSIERALKYMGLTANQAITDIKLDRVFIGSCTNSRIEDLRAAAEIAKGRKVAASVKQAIVVPGSGLVKAQAEREGLDKIFLEAGFEWREPGCSMCLAMNPDRLESGEHCASTSNRNFEGRQGAGGRTHLVSPAMAAAAAVAGHFIDVRELIQGSAA</sequence>
<name>LEUC_PSEPG</name>
<accession>B0KF81</accession>
<comment type="function">
    <text evidence="1">Catalyzes the isomerization between 2-isopropylmalate and 3-isopropylmalate, via the formation of 2-isopropylmaleate.</text>
</comment>
<comment type="catalytic activity">
    <reaction evidence="1">
        <text>(2R,3S)-3-isopropylmalate = (2S)-2-isopropylmalate</text>
        <dbReference type="Rhea" id="RHEA:32287"/>
        <dbReference type="ChEBI" id="CHEBI:1178"/>
        <dbReference type="ChEBI" id="CHEBI:35121"/>
        <dbReference type="EC" id="4.2.1.33"/>
    </reaction>
</comment>
<comment type="cofactor">
    <cofactor evidence="1">
        <name>[4Fe-4S] cluster</name>
        <dbReference type="ChEBI" id="CHEBI:49883"/>
    </cofactor>
    <text evidence="1">Binds 1 [4Fe-4S] cluster per subunit.</text>
</comment>
<comment type="pathway">
    <text evidence="1">Amino-acid biosynthesis; L-leucine biosynthesis; L-leucine from 3-methyl-2-oxobutanoate: step 2/4.</text>
</comment>
<comment type="subunit">
    <text evidence="1">Heterodimer of LeuC and LeuD.</text>
</comment>
<comment type="similarity">
    <text evidence="1">Belongs to the aconitase/IPM isomerase family. LeuC type 1 subfamily.</text>
</comment>
<gene>
    <name evidence="1" type="primary">leuC</name>
    <name type="ordered locus">PputGB1_1516</name>
</gene>
<dbReference type="EC" id="4.2.1.33" evidence="1"/>
<dbReference type="EMBL" id="CP000926">
    <property type="protein sequence ID" value="ABY97421.1"/>
    <property type="molecule type" value="Genomic_DNA"/>
</dbReference>
<dbReference type="RefSeq" id="WP_012271188.1">
    <property type="nucleotide sequence ID" value="NC_010322.1"/>
</dbReference>
<dbReference type="SMR" id="B0KF81"/>
<dbReference type="KEGG" id="ppg:PputGB1_1516"/>
<dbReference type="eggNOG" id="COG0065">
    <property type="taxonomic scope" value="Bacteria"/>
</dbReference>
<dbReference type="HOGENOM" id="CLU_006714_3_4_6"/>
<dbReference type="UniPathway" id="UPA00048">
    <property type="reaction ID" value="UER00071"/>
</dbReference>
<dbReference type="Proteomes" id="UP000002157">
    <property type="component" value="Chromosome"/>
</dbReference>
<dbReference type="GO" id="GO:0003861">
    <property type="term" value="F:3-isopropylmalate dehydratase activity"/>
    <property type="evidence" value="ECO:0007669"/>
    <property type="project" value="UniProtKB-UniRule"/>
</dbReference>
<dbReference type="GO" id="GO:0051539">
    <property type="term" value="F:4 iron, 4 sulfur cluster binding"/>
    <property type="evidence" value="ECO:0007669"/>
    <property type="project" value="UniProtKB-KW"/>
</dbReference>
<dbReference type="GO" id="GO:0046872">
    <property type="term" value="F:metal ion binding"/>
    <property type="evidence" value="ECO:0007669"/>
    <property type="project" value="UniProtKB-KW"/>
</dbReference>
<dbReference type="GO" id="GO:0009098">
    <property type="term" value="P:L-leucine biosynthetic process"/>
    <property type="evidence" value="ECO:0007669"/>
    <property type="project" value="UniProtKB-UniRule"/>
</dbReference>
<dbReference type="CDD" id="cd01583">
    <property type="entry name" value="IPMI"/>
    <property type="match status" value="1"/>
</dbReference>
<dbReference type="FunFam" id="3.30.499.10:FF:000007">
    <property type="entry name" value="3-isopropylmalate dehydratase large subunit"/>
    <property type="match status" value="1"/>
</dbReference>
<dbReference type="Gene3D" id="3.30.499.10">
    <property type="entry name" value="Aconitase, domain 3"/>
    <property type="match status" value="2"/>
</dbReference>
<dbReference type="HAMAP" id="MF_01026">
    <property type="entry name" value="LeuC_type1"/>
    <property type="match status" value="1"/>
</dbReference>
<dbReference type="InterPro" id="IPR004430">
    <property type="entry name" value="3-IsopropMal_deHydase_lsu"/>
</dbReference>
<dbReference type="InterPro" id="IPR015931">
    <property type="entry name" value="Acnase/IPM_dHydase_lsu_aba_1/3"/>
</dbReference>
<dbReference type="InterPro" id="IPR001030">
    <property type="entry name" value="Acoase/IPM_deHydtase_lsu_aba"/>
</dbReference>
<dbReference type="InterPro" id="IPR018136">
    <property type="entry name" value="Aconitase_4Fe-4S_BS"/>
</dbReference>
<dbReference type="InterPro" id="IPR036008">
    <property type="entry name" value="Aconitase_4Fe-4S_dom"/>
</dbReference>
<dbReference type="InterPro" id="IPR050067">
    <property type="entry name" value="IPM_dehydratase_rel_enz"/>
</dbReference>
<dbReference type="InterPro" id="IPR033941">
    <property type="entry name" value="IPMI_cat"/>
</dbReference>
<dbReference type="NCBIfam" id="TIGR00170">
    <property type="entry name" value="leuC"/>
    <property type="match status" value="1"/>
</dbReference>
<dbReference type="NCBIfam" id="NF004016">
    <property type="entry name" value="PRK05478.1"/>
    <property type="match status" value="1"/>
</dbReference>
<dbReference type="NCBIfam" id="NF009116">
    <property type="entry name" value="PRK12466.1"/>
    <property type="match status" value="1"/>
</dbReference>
<dbReference type="PANTHER" id="PTHR43822:SF9">
    <property type="entry name" value="3-ISOPROPYLMALATE DEHYDRATASE"/>
    <property type="match status" value="1"/>
</dbReference>
<dbReference type="PANTHER" id="PTHR43822">
    <property type="entry name" value="HOMOACONITASE, MITOCHONDRIAL-RELATED"/>
    <property type="match status" value="1"/>
</dbReference>
<dbReference type="Pfam" id="PF00330">
    <property type="entry name" value="Aconitase"/>
    <property type="match status" value="1"/>
</dbReference>
<dbReference type="PRINTS" id="PR00415">
    <property type="entry name" value="ACONITASE"/>
</dbReference>
<dbReference type="SUPFAM" id="SSF53732">
    <property type="entry name" value="Aconitase iron-sulfur domain"/>
    <property type="match status" value="1"/>
</dbReference>
<dbReference type="PROSITE" id="PS00450">
    <property type="entry name" value="ACONITASE_1"/>
    <property type="match status" value="1"/>
</dbReference>
<dbReference type="PROSITE" id="PS01244">
    <property type="entry name" value="ACONITASE_2"/>
    <property type="match status" value="1"/>
</dbReference>
<feature type="chain" id="PRO_1000084220" description="3-isopropylmalate dehydratase large subunit">
    <location>
        <begin position="1"/>
        <end position="477"/>
    </location>
</feature>
<feature type="binding site" evidence="1">
    <location>
        <position position="352"/>
    </location>
    <ligand>
        <name>[4Fe-4S] cluster</name>
        <dbReference type="ChEBI" id="CHEBI:49883"/>
    </ligand>
</feature>
<feature type="binding site" evidence="1">
    <location>
        <position position="413"/>
    </location>
    <ligand>
        <name>[4Fe-4S] cluster</name>
        <dbReference type="ChEBI" id="CHEBI:49883"/>
    </ligand>
</feature>
<feature type="binding site" evidence="1">
    <location>
        <position position="416"/>
    </location>
    <ligand>
        <name>[4Fe-4S] cluster</name>
        <dbReference type="ChEBI" id="CHEBI:49883"/>
    </ligand>
</feature>
<reference key="1">
    <citation type="submission" date="2008-01" db="EMBL/GenBank/DDBJ databases">
        <title>Complete sequence of Pseudomonas putida GB-1.</title>
        <authorList>
            <consortium name="US DOE Joint Genome Institute"/>
            <person name="Copeland A."/>
            <person name="Lucas S."/>
            <person name="Lapidus A."/>
            <person name="Barry K."/>
            <person name="Glavina del Rio T."/>
            <person name="Dalin E."/>
            <person name="Tice H."/>
            <person name="Pitluck S."/>
            <person name="Bruce D."/>
            <person name="Goodwin L."/>
            <person name="Chertkov O."/>
            <person name="Brettin T."/>
            <person name="Detter J.C."/>
            <person name="Han C."/>
            <person name="Kuske C.R."/>
            <person name="Schmutz J."/>
            <person name="Larimer F."/>
            <person name="Land M."/>
            <person name="Hauser L."/>
            <person name="Kyrpides N."/>
            <person name="Kim E."/>
            <person name="McCarthy J.K."/>
            <person name="Richardson P."/>
        </authorList>
    </citation>
    <scope>NUCLEOTIDE SEQUENCE [LARGE SCALE GENOMIC DNA]</scope>
    <source>
        <strain>GB-1</strain>
    </source>
</reference>
<proteinExistence type="inferred from homology"/>
<keyword id="KW-0004">4Fe-4S</keyword>
<keyword id="KW-0028">Amino-acid biosynthesis</keyword>
<keyword id="KW-0100">Branched-chain amino acid biosynthesis</keyword>
<keyword id="KW-0408">Iron</keyword>
<keyword id="KW-0411">Iron-sulfur</keyword>
<keyword id="KW-0432">Leucine biosynthesis</keyword>
<keyword id="KW-0456">Lyase</keyword>
<keyword id="KW-0479">Metal-binding</keyword>